<dbReference type="EC" id="6.3.1.5" evidence="1"/>
<dbReference type="EMBL" id="AL591977">
    <property type="protein sequence ID" value="CAC99171.1"/>
    <property type="molecule type" value="Genomic_DNA"/>
</dbReference>
<dbReference type="PIR" id="AE1211">
    <property type="entry name" value="AE1211"/>
</dbReference>
<dbReference type="RefSeq" id="NP_464618.1">
    <property type="nucleotide sequence ID" value="NC_003210.1"/>
</dbReference>
<dbReference type="RefSeq" id="WP_009931487.1">
    <property type="nucleotide sequence ID" value="NZ_CP149495.1"/>
</dbReference>
<dbReference type="SMR" id="Q8Y825"/>
<dbReference type="STRING" id="169963.gene:17593749"/>
<dbReference type="PaxDb" id="169963-lmo1093"/>
<dbReference type="EnsemblBacteria" id="CAC99171">
    <property type="protein sequence ID" value="CAC99171"/>
    <property type="gene ID" value="CAC99171"/>
</dbReference>
<dbReference type="GeneID" id="986246"/>
<dbReference type="KEGG" id="lmo:lmo1093"/>
<dbReference type="PATRIC" id="fig|169963.11.peg.1123"/>
<dbReference type="eggNOG" id="COG0171">
    <property type="taxonomic scope" value="Bacteria"/>
</dbReference>
<dbReference type="HOGENOM" id="CLU_059327_3_0_9"/>
<dbReference type="OrthoDB" id="9803818at2"/>
<dbReference type="PhylomeDB" id="Q8Y825"/>
<dbReference type="BioCyc" id="LMON169963:LMO1093-MONOMER"/>
<dbReference type="UniPathway" id="UPA00253">
    <property type="reaction ID" value="UER00333"/>
</dbReference>
<dbReference type="Proteomes" id="UP000000817">
    <property type="component" value="Chromosome"/>
</dbReference>
<dbReference type="GO" id="GO:0005737">
    <property type="term" value="C:cytoplasm"/>
    <property type="evidence" value="ECO:0000318"/>
    <property type="project" value="GO_Central"/>
</dbReference>
<dbReference type="GO" id="GO:0005524">
    <property type="term" value="F:ATP binding"/>
    <property type="evidence" value="ECO:0007669"/>
    <property type="project" value="UniProtKB-UniRule"/>
</dbReference>
<dbReference type="GO" id="GO:0004359">
    <property type="term" value="F:glutaminase activity"/>
    <property type="evidence" value="ECO:0007669"/>
    <property type="project" value="InterPro"/>
</dbReference>
<dbReference type="GO" id="GO:0046872">
    <property type="term" value="F:metal ion binding"/>
    <property type="evidence" value="ECO:0007669"/>
    <property type="project" value="UniProtKB-KW"/>
</dbReference>
<dbReference type="GO" id="GO:0003952">
    <property type="term" value="F:NAD+ synthase (glutamine-hydrolyzing) activity"/>
    <property type="evidence" value="ECO:0007669"/>
    <property type="project" value="InterPro"/>
</dbReference>
<dbReference type="GO" id="GO:0008795">
    <property type="term" value="F:NAD+ synthase activity"/>
    <property type="evidence" value="ECO:0007669"/>
    <property type="project" value="UniProtKB-UniRule"/>
</dbReference>
<dbReference type="GO" id="GO:0009435">
    <property type="term" value="P:NAD biosynthetic process"/>
    <property type="evidence" value="ECO:0000318"/>
    <property type="project" value="GO_Central"/>
</dbReference>
<dbReference type="CDD" id="cd00553">
    <property type="entry name" value="NAD_synthase"/>
    <property type="match status" value="1"/>
</dbReference>
<dbReference type="FunFam" id="3.40.50.620:FF:000015">
    <property type="entry name" value="NH(3)-dependent NAD(+) synthetase"/>
    <property type="match status" value="1"/>
</dbReference>
<dbReference type="Gene3D" id="3.40.50.620">
    <property type="entry name" value="HUPs"/>
    <property type="match status" value="1"/>
</dbReference>
<dbReference type="HAMAP" id="MF_00193">
    <property type="entry name" value="NadE_ammonia_dep"/>
    <property type="match status" value="1"/>
</dbReference>
<dbReference type="InterPro" id="IPR022310">
    <property type="entry name" value="NAD/GMP_synthase"/>
</dbReference>
<dbReference type="InterPro" id="IPR003694">
    <property type="entry name" value="NAD_synthase"/>
</dbReference>
<dbReference type="InterPro" id="IPR022926">
    <property type="entry name" value="NH(3)-dep_NAD(+)_synth"/>
</dbReference>
<dbReference type="InterPro" id="IPR014729">
    <property type="entry name" value="Rossmann-like_a/b/a_fold"/>
</dbReference>
<dbReference type="NCBIfam" id="TIGR00552">
    <property type="entry name" value="nadE"/>
    <property type="match status" value="1"/>
</dbReference>
<dbReference type="NCBIfam" id="NF001979">
    <property type="entry name" value="PRK00768.1"/>
    <property type="match status" value="1"/>
</dbReference>
<dbReference type="PANTHER" id="PTHR23090">
    <property type="entry name" value="NH 3 /GLUTAMINE-DEPENDENT NAD + SYNTHETASE"/>
    <property type="match status" value="1"/>
</dbReference>
<dbReference type="PANTHER" id="PTHR23090:SF7">
    <property type="entry name" value="NH(3)-DEPENDENT NAD(+) SYNTHETASE"/>
    <property type="match status" value="1"/>
</dbReference>
<dbReference type="Pfam" id="PF02540">
    <property type="entry name" value="NAD_synthase"/>
    <property type="match status" value="1"/>
</dbReference>
<dbReference type="SUPFAM" id="SSF52402">
    <property type="entry name" value="Adenine nucleotide alpha hydrolases-like"/>
    <property type="match status" value="1"/>
</dbReference>
<organism>
    <name type="scientific">Listeria monocytogenes serovar 1/2a (strain ATCC BAA-679 / EGD-e)</name>
    <dbReference type="NCBI Taxonomy" id="169963"/>
    <lineage>
        <taxon>Bacteria</taxon>
        <taxon>Bacillati</taxon>
        <taxon>Bacillota</taxon>
        <taxon>Bacilli</taxon>
        <taxon>Bacillales</taxon>
        <taxon>Listeriaceae</taxon>
        <taxon>Listeria</taxon>
    </lineage>
</organism>
<comment type="function">
    <text evidence="1">Catalyzes the ATP-dependent amidation of deamido-NAD to form NAD. Uses ammonia as a nitrogen source.</text>
</comment>
<comment type="catalytic activity">
    <reaction evidence="1">
        <text>deamido-NAD(+) + NH4(+) + ATP = AMP + diphosphate + NAD(+) + H(+)</text>
        <dbReference type="Rhea" id="RHEA:21188"/>
        <dbReference type="ChEBI" id="CHEBI:15378"/>
        <dbReference type="ChEBI" id="CHEBI:28938"/>
        <dbReference type="ChEBI" id="CHEBI:30616"/>
        <dbReference type="ChEBI" id="CHEBI:33019"/>
        <dbReference type="ChEBI" id="CHEBI:57540"/>
        <dbReference type="ChEBI" id="CHEBI:58437"/>
        <dbReference type="ChEBI" id="CHEBI:456215"/>
        <dbReference type="EC" id="6.3.1.5"/>
    </reaction>
</comment>
<comment type="pathway">
    <text evidence="1">Cofactor biosynthesis; NAD(+) biosynthesis; NAD(+) from deamido-NAD(+) (ammonia route): step 1/1.</text>
</comment>
<comment type="subunit">
    <text evidence="1">Homodimer.</text>
</comment>
<comment type="similarity">
    <text evidence="1">Belongs to the NAD synthetase family.</text>
</comment>
<name>NADE_LISMO</name>
<keyword id="KW-0067">ATP-binding</keyword>
<keyword id="KW-0436">Ligase</keyword>
<keyword id="KW-0460">Magnesium</keyword>
<keyword id="KW-0479">Metal-binding</keyword>
<keyword id="KW-0520">NAD</keyword>
<keyword id="KW-0547">Nucleotide-binding</keyword>
<keyword id="KW-1185">Reference proteome</keyword>
<gene>
    <name evidence="1" type="primary">nadE</name>
    <name type="ordered locus">lmo1093</name>
</gene>
<reference key="1">
    <citation type="journal article" date="2001" name="Science">
        <title>Comparative genomics of Listeria species.</title>
        <authorList>
            <person name="Glaser P."/>
            <person name="Frangeul L."/>
            <person name="Buchrieser C."/>
            <person name="Rusniok C."/>
            <person name="Amend A."/>
            <person name="Baquero F."/>
            <person name="Berche P."/>
            <person name="Bloecker H."/>
            <person name="Brandt P."/>
            <person name="Chakraborty T."/>
            <person name="Charbit A."/>
            <person name="Chetouani F."/>
            <person name="Couve E."/>
            <person name="de Daruvar A."/>
            <person name="Dehoux P."/>
            <person name="Domann E."/>
            <person name="Dominguez-Bernal G."/>
            <person name="Duchaud E."/>
            <person name="Durant L."/>
            <person name="Dussurget O."/>
            <person name="Entian K.-D."/>
            <person name="Fsihi H."/>
            <person name="Garcia-del Portillo F."/>
            <person name="Garrido P."/>
            <person name="Gautier L."/>
            <person name="Goebel W."/>
            <person name="Gomez-Lopez N."/>
            <person name="Hain T."/>
            <person name="Hauf J."/>
            <person name="Jackson D."/>
            <person name="Jones L.-M."/>
            <person name="Kaerst U."/>
            <person name="Kreft J."/>
            <person name="Kuhn M."/>
            <person name="Kunst F."/>
            <person name="Kurapkat G."/>
            <person name="Madueno E."/>
            <person name="Maitournam A."/>
            <person name="Mata Vicente J."/>
            <person name="Ng E."/>
            <person name="Nedjari H."/>
            <person name="Nordsiek G."/>
            <person name="Novella S."/>
            <person name="de Pablos B."/>
            <person name="Perez-Diaz J.-C."/>
            <person name="Purcell R."/>
            <person name="Remmel B."/>
            <person name="Rose M."/>
            <person name="Schlueter T."/>
            <person name="Simoes N."/>
            <person name="Tierrez A."/>
            <person name="Vazquez-Boland J.-A."/>
            <person name="Voss H."/>
            <person name="Wehland J."/>
            <person name="Cossart P."/>
        </authorList>
    </citation>
    <scope>NUCLEOTIDE SEQUENCE [LARGE SCALE GENOMIC DNA]</scope>
    <source>
        <strain>ATCC BAA-679 / EGD-e</strain>
    </source>
</reference>
<evidence type="ECO:0000255" key="1">
    <source>
        <dbReference type="HAMAP-Rule" id="MF_00193"/>
    </source>
</evidence>
<accession>Q8Y825</accession>
<sequence>MEIRERILADMQVAETIDAHEEIRKSVEFLKAYLKKNTFLKSFVLGISGGQDSTLTGKLAQMAISEMRAETGDDEYRFFAVSLPYGTQLDESDRQDALNFMEPDNRLTVNIKASVDASVAALAEAGVELSDFAKGNEKARERMKVQYAIAAMHKGVVVGTDHSAEAVTGFYTKYGDGGTDINPLFRLNKRQGKALLKELGCPEHLYLKKPTADLEDNKPALPDEVALGVTYDQIDDYLEGKEVPADAAAKIENWFIKTEHKRHMAITIFDDFWK</sequence>
<proteinExistence type="inferred from homology"/>
<feature type="chain" id="PRO_0000152179" description="NH(3)-dependent NAD(+) synthetase">
    <location>
        <begin position="1"/>
        <end position="274"/>
    </location>
</feature>
<feature type="binding site" evidence="1">
    <location>
        <begin position="46"/>
        <end position="53"/>
    </location>
    <ligand>
        <name>ATP</name>
        <dbReference type="ChEBI" id="CHEBI:30616"/>
    </ligand>
</feature>
<feature type="binding site" evidence="1">
    <location>
        <position position="52"/>
    </location>
    <ligand>
        <name>Mg(2+)</name>
        <dbReference type="ChEBI" id="CHEBI:18420"/>
    </ligand>
</feature>
<feature type="binding site" evidence="1">
    <location>
        <position position="140"/>
    </location>
    <ligand>
        <name>deamido-NAD(+)</name>
        <dbReference type="ChEBI" id="CHEBI:58437"/>
    </ligand>
</feature>
<feature type="binding site" evidence="1">
    <location>
        <position position="160"/>
    </location>
    <ligand>
        <name>ATP</name>
        <dbReference type="ChEBI" id="CHEBI:30616"/>
    </ligand>
</feature>
<feature type="binding site" evidence="1">
    <location>
        <position position="165"/>
    </location>
    <ligand>
        <name>Mg(2+)</name>
        <dbReference type="ChEBI" id="CHEBI:18420"/>
    </ligand>
</feature>
<feature type="binding site" evidence="1">
    <location>
        <position position="173"/>
    </location>
    <ligand>
        <name>deamido-NAD(+)</name>
        <dbReference type="ChEBI" id="CHEBI:58437"/>
    </ligand>
</feature>
<feature type="binding site" evidence="1">
    <location>
        <position position="180"/>
    </location>
    <ligand>
        <name>deamido-NAD(+)</name>
        <dbReference type="ChEBI" id="CHEBI:58437"/>
    </ligand>
</feature>
<feature type="binding site" evidence="1">
    <location>
        <position position="189"/>
    </location>
    <ligand>
        <name>ATP</name>
        <dbReference type="ChEBI" id="CHEBI:30616"/>
    </ligand>
</feature>
<feature type="binding site" evidence="1">
    <location>
        <position position="211"/>
    </location>
    <ligand>
        <name>ATP</name>
        <dbReference type="ChEBI" id="CHEBI:30616"/>
    </ligand>
</feature>
<feature type="binding site" evidence="1">
    <location>
        <begin position="260"/>
        <end position="261"/>
    </location>
    <ligand>
        <name>deamido-NAD(+)</name>
        <dbReference type="ChEBI" id="CHEBI:58437"/>
    </ligand>
</feature>
<protein>
    <recommendedName>
        <fullName evidence="1">NH(3)-dependent NAD(+) synthetase</fullName>
        <ecNumber evidence="1">6.3.1.5</ecNumber>
    </recommendedName>
</protein>